<sequence length="321" mass="33452">MTTQTVSGRRYFTKAWLMEQKSLIALLVLIAIVSTLSPNFFTINNLFNILQQTSVNAIMAVGMTLVILTSGIDLSVGSLLALTGAVAASIVGIEVNALVAVAAALALGAAIGAVTGVIVAKGRVQAFIATLVMMLLLRGVTMVYTNGSPVNTGFTENADLFGWFGIGRPLGVPTPVWIMGIVFLAAWYMLHHTRLGRYIYALGGNEAATRLSGINVNKIKIIVYSLCGLLASLAGIIEVARLSSAQPTAGTGYELDAIAAVVLGGTSLAGGKGRIVGTLIGALILGFLNNGLNLLGVSSYYQMIVKAVVILLAVLVDNKKQ</sequence>
<keyword id="KW-0997">Cell inner membrane</keyword>
<keyword id="KW-1003">Cell membrane</keyword>
<keyword id="KW-0472">Membrane</keyword>
<keyword id="KW-1185">Reference proteome</keyword>
<keyword id="KW-0762">Sugar transport</keyword>
<keyword id="KW-0812">Transmembrane</keyword>
<keyword id="KW-1133">Transmembrane helix</keyword>
<keyword id="KW-0813">Transport</keyword>
<evidence type="ECO:0000250" key="1">
    <source>
        <dbReference type="UniProtKB" id="P0AGI1"/>
    </source>
</evidence>
<evidence type="ECO:0000305" key="2"/>
<name>RBSC_ECO57</name>
<feature type="chain" id="PRO_0000060224" description="Ribose import permease protein RbsC">
    <location>
        <begin position="1"/>
        <end position="321"/>
    </location>
</feature>
<feature type="topological domain" description="Cytoplasmic" evidence="1">
    <location>
        <begin position="1"/>
        <end position="22"/>
    </location>
</feature>
<feature type="transmembrane region" description="Helical" evidence="1">
    <location>
        <begin position="23"/>
        <end position="43"/>
    </location>
</feature>
<feature type="topological domain" description="Periplasmic" evidence="1">
    <location>
        <begin position="44"/>
        <end position="56"/>
    </location>
</feature>
<feature type="transmembrane region" description="Helical" evidence="1">
    <location>
        <begin position="57"/>
        <end position="77"/>
    </location>
</feature>
<feature type="topological domain" description="Cytoplasmic" evidence="1">
    <location>
        <begin position="78"/>
        <end position="125"/>
    </location>
</feature>
<feature type="transmembrane region" description="Helical" evidence="1">
    <location>
        <begin position="126"/>
        <end position="145"/>
    </location>
</feature>
<feature type="topological domain" description="Periplasmic" evidence="1">
    <location>
        <begin position="146"/>
        <end position="168"/>
    </location>
</feature>
<feature type="transmembrane region" description="Helical" evidence="1">
    <location>
        <begin position="169"/>
        <end position="190"/>
    </location>
</feature>
<feature type="topological domain" description="Cytoplasmic" evidence="1">
    <location>
        <begin position="191"/>
        <end position="220"/>
    </location>
</feature>
<feature type="transmembrane region" description="Helical" evidence="1">
    <location>
        <begin position="221"/>
        <end position="240"/>
    </location>
</feature>
<feature type="topological domain" description="Periplasmic" evidence="1">
    <location>
        <begin position="241"/>
        <end position="294"/>
    </location>
</feature>
<feature type="transmembrane region" description="Helical" evidence="1">
    <location>
        <begin position="295"/>
        <end position="316"/>
    </location>
</feature>
<feature type="topological domain" description="Cytoplasmic" evidence="1">
    <location>
        <begin position="317"/>
        <end position="321"/>
    </location>
</feature>
<protein>
    <recommendedName>
        <fullName evidence="1">Ribose import permease protein RbsC</fullName>
    </recommendedName>
</protein>
<gene>
    <name type="primary">rbsC</name>
    <name type="ordered locus">Z5251</name>
    <name type="ordered locus">ECs4692</name>
</gene>
<dbReference type="EMBL" id="AE005174">
    <property type="protein sequence ID" value="AAG58953.1"/>
    <property type="molecule type" value="Genomic_DNA"/>
</dbReference>
<dbReference type="EMBL" id="BA000007">
    <property type="protein sequence ID" value="BAB38115.1"/>
    <property type="molecule type" value="Genomic_DNA"/>
</dbReference>
<dbReference type="PIR" id="D91215">
    <property type="entry name" value="D91215"/>
</dbReference>
<dbReference type="RefSeq" id="NP_312719.1">
    <property type="nucleotide sequence ID" value="NC_002695.1"/>
</dbReference>
<dbReference type="RefSeq" id="WP_000211858.1">
    <property type="nucleotide sequence ID" value="NZ_VOAI01000011.1"/>
</dbReference>
<dbReference type="STRING" id="155864.Z5251"/>
<dbReference type="GeneID" id="915328"/>
<dbReference type="GeneID" id="93778199"/>
<dbReference type="KEGG" id="ece:Z5251"/>
<dbReference type="KEGG" id="ecs:ECs_4692"/>
<dbReference type="PATRIC" id="fig|386585.9.peg.4898"/>
<dbReference type="eggNOG" id="COG1172">
    <property type="taxonomic scope" value="Bacteria"/>
</dbReference>
<dbReference type="HOGENOM" id="CLU_028880_2_2_6"/>
<dbReference type="OMA" id="SFYQMVV"/>
<dbReference type="Proteomes" id="UP000000558">
    <property type="component" value="Chromosome"/>
</dbReference>
<dbReference type="Proteomes" id="UP000002519">
    <property type="component" value="Chromosome"/>
</dbReference>
<dbReference type="GO" id="GO:0005886">
    <property type="term" value="C:plasma membrane"/>
    <property type="evidence" value="ECO:0007669"/>
    <property type="project" value="UniProtKB-SubCell"/>
</dbReference>
<dbReference type="GO" id="GO:0022857">
    <property type="term" value="F:transmembrane transporter activity"/>
    <property type="evidence" value="ECO:0007669"/>
    <property type="project" value="InterPro"/>
</dbReference>
<dbReference type="CDD" id="cd06579">
    <property type="entry name" value="TM_PBP1_transp_AraH_like"/>
    <property type="match status" value="1"/>
</dbReference>
<dbReference type="InterPro" id="IPR001851">
    <property type="entry name" value="ABC_transp_permease"/>
</dbReference>
<dbReference type="NCBIfam" id="NF007067">
    <property type="entry name" value="PRK09512.1"/>
    <property type="match status" value="1"/>
</dbReference>
<dbReference type="PANTHER" id="PTHR32196:SF21">
    <property type="entry name" value="ABC TRANSPORTER PERMEASE PROTEIN YPHD-RELATED"/>
    <property type="match status" value="1"/>
</dbReference>
<dbReference type="PANTHER" id="PTHR32196">
    <property type="entry name" value="ABC TRANSPORTER PERMEASE PROTEIN YPHD-RELATED-RELATED"/>
    <property type="match status" value="1"/>
</dbReference>
<dbReference type="Pfam" id="PF02653">
    <property type="entry name" value="BPD_transp_2"/>
    <property type="match status" value="1"/>
</dbReference>
<organism>
    <name type="scientific">Escherichia coli O157:H7</name>
    <dbReference type="NCBI Taxonomy" id="83334"/>
    <lineage>
        <taxon>Bacteria</taxon>
        <taxon>Pseudomonadati</taxon>
        <taxon>Pseudomonadota</taxon>
        <taxon>Gammaproteobacteria</taxon>
        <taxon>Enterobacterales</taxon>
        <taxon>Enterobacteriaceae</taxon>
        <taxon>Escherichia</taxon>
    </lineage>
</organism>
<reference key="1">
    <citation type="journal article" date="2001" name="Nature">
        <title>Genome sequence of enterohaemorrhagic Escherichia coli O157:H7.</title>
        <authorList>
            <person name="Perna N.T."/>
            <person name="Plunkett G. III"/>
            <person name="Burland V."/>
            <person name="Mau B."/>
            <person name="Glasner J.D."/>
            <person name="Rose D.J."/>
            <person name="Mayhew G.F."/>
            <person name="Evans P.S."/>
            <person name="Gregor J."/>
            <person name="Kirkpatrick H.A."/>
            <person name="Posfai G."/>
            <person name="Hackett J."/>
            <person name="Klink S."/>
            <person name="Boutin A."/>
            <person name="Shao Y."/>
            <person name="Miller L."/>
            <person name="Grotbeck E.J."/>
            <person name="Davis N.W."/>
            <person name="Lim A."/>
            <person name="Dimalanta E.T."/>
            <person name="Potamousis K."/>
            <person name="Apodaca J."/>
            <person name="Anantharaman T.S."/>
            <person name="Lin J."/>
            <person name="Yen G."/>
            <person name="Schwartz D.C."/>
            <person name="Welch R.A."/>
            <person name="Blattner F.R."/>
        </authorList>
    </citation>
    <scope>NUCLEOTIDE SEQUENCE [LARGE SCALE GENOMIC DNA]</scope>
    <source>
        <strain>O157:H7 / EDL933 / ATCC 700927 / EHEC</strain>
    </source>
</reference>
<reference key="2">
    <citation type="journal article" date="2001" name="DNA Res.">
        <title>Complete genome sequence of enterohemorrhagic Escherichia coli O157:H7 and genomic comparison with a laboratory strain K-12.</title>
        <authorList>
            <person name="Hayashi T."/>
            <person name="Makino K."/>
            <person name="Ohnishi M."/>
            <person name="Kurokawa K."/>
            <person name="Ishii K."/>
            <person name="Yokoyama K."/>
            <person name="Han C.-G."/>
            <person name="Ohtsubo E."/>
            <person name="Nakayama K."/>
            <person name="Murata T."/>
            <person name="Tanaka M."/>
            <person name="Tobe T."/>
            <person name="Iida T."/>
            <person name="Takami H."/>
            <person name="Honda T."/>
            <person name="Sasakawa C."/>
            <person name="Ogasawara N."/>
            <person name="Yasunaga T."/>
            <person name="Kuhara S."/>
            <person name="Shiba T."/>
            <person name="Hattori M."/>
            <person name="Shinagawa H."/>
        </authorList>
    </citation>
    <scope>NUCLEOTIDE SEQUENCE [LARGE SCALE GENOMIC DNA]</scope>
    <source>
        <strain>O157:H7 / Sakai / RIMD 0509952 / EHEC</strain>
    </source>
</reference>
<accession>P0AGI3</accession>
<accession>P04984</accession>
<proteinExistence type="inferred from homology"/>
<comment type="function">
    <text evidence="1">Part of the ABC transporter complex RbsABC involved in ribose import. Probably responsible for the translocation of the substrate across the membrane.</text>
</comment>
<comment type="subunit">
    <text evidence="1">The complex is composed of an ATP-binding protein (RbsA), two transmembrane proteins (RbsC) and a solute-binding protein (RbsB).</text>
</comment>
<comment type="subcellular location">
    <subcellularLocation>
        <location evidence="1">Cell inner membrane</location>
        <topology evidence="1">Multi-pass membrane protein</topology>
    </subcellularLocation>
</comment>
<comment type="similarity">
    <text evidence="2">Belongs to the binding-protein-dependent transport system permease family. AraH/RbsC subfamily.</text>
</comment>